<protein>
    <recommendedName>
        <fullName evidence="1">UDP-4-amino-4-deoxy-L-arabinose--oxoglutarate aminotransferase</fullName>
        <ecNumber evidence="1">2.6.1.87</ecNumber>
    </recommendedName>
    <alternativeName>
        <fullName evidence="1">UDP-(beta-L-threo-pentapyranosyl-4''-ulose diphosphate) aminotransferase</fullName>
        <shortName evidence="1">UDP-Ara4O aminotransferase</shortName>
    </alternativeName>
    <alternativeName>
        <fullName evidence="1">UDP-4-amino-4-deoxy-L-arabinose aminotransferase</fullName>
    </alternativeName>
</protein>
<accession>B4ETL5</accession>
<comment type="function">
    <text evidence="1">Catalyzes the conversion of UDP-4-keto-arabinose (UDP-Ara4O) to UDP-4-amino-4-deoxy-L-arabinose (UDP-L-Ara4N). The modified arabinose is attached to lipid A and is required for resistance to polymyxin and cationic antimicrobial peptides.</text>
</comment>
<comment type="catalytic activity">
    <reaction evidence="1">
        <text>UDP-4-amino-4-deoxy-beta-L-arabinose + 2-oxoglutarate = UDP-beta-L-threo-pentopyranos-4-ulose + L-glutamate</text>
        <dbReference type="Rhea" id="RHEA:24710"/>
        <dbReference type="ChEBI" id="CHEBI:16810"/>
        <dbReference type="ChEBI" id="CHEBI:29985"/>
        <dbReference type="ChEBI" id="CHEBI:58708"/>
        <dbReference type="ChEBI" id="CHEBI:58710"/>
        <dbReference type="EC" id="2.6.1.87"/>
    </reaction>
</comment>
<comment type="cofactor">
    <cofactor evidence="1">
        <name>pyridoxal 5'-phosphate</name>
        <dbReference type="ChEBI" id="CHEBI:597326"/>
    </cofactor>
</comment>
<comment type="pathway">
    <text evidence="1">Nucleotide-sugar biosynthesis; UDP-4-deoxy-4-formamido-beta-L-arabinose biosynthesis; UDP-4-deoxy-4-formamido-beta-L-arabinose from UDP-alpha-D-glucuronate: step 2/3.</text>
</comment>
<comment type="pathway">
    <text evidence="1">Bacterial outer membrane biogenesis; lipopolysaccharide biosynthesis.</text>
</comment>
<comment type="subunit">
    <text evidence="1">Homodimer.</text>
</comment>
<comment type="similarity">
    <text evidence="1">Belongs to the DegT/DnrJ/EryC1 family. ArnB subfamily.</text>
</comment>
<organism>
    <name type="scientific">Proteus mirabilis (strain HI4320)</name>
    <dbReference type="NCBI Taxonomy" id="529507"/>
    <lineage>
        <taxon>Bacteria</taxon>
        <taxon>Pseudomonadati</taxon>
        <taxon>Pseudomonadota</taxon>
        <taxon>Gammaproteobacteria</taxon>
        <taxon>Enterobacterales</taxon>
        <taxon>Morganellaceae</taxon>
        <taxon>Proteus</taxon>
    </lineage>
</organism>
<proteinExistence type="inferred from homology"/>
<gene>
    <name evidence="1" type="primary">arnB</name>
    <name type="ordered locus">PMI1043</name>
</gene>
<sequence>MSHFLPFSRPAIGDEEIKAVESVLRSGWITTGPQNHQLEQDFCEKFGSKHAIAVCSATAGMHVVLMAMGIGPGDEVITPSQTWVSTINIITLLGAEPVMVDIDRDTLMVSAESVKKAITPRTKAIIPVHYAGAPCDLDALRAVADEAGIPLIEDAAHAIGTRYKDEWIGEKGTSIFSFHAIKNVTCAEGGLVVTDDDELANRVRCLKFHGLGVDAFDRQVQGRKPQAEVVEPGYKYNLSDIHAAIAVVQLSRLEEMNAKRAELVALYREKLQDSPLEMLSVPEYPHLHANHLFMVRVDKNACGIDRDTFMEKLKQKEIGTGLHFRAAHTQKYYRERYPSLSLPQSEWNSATLCSLPLFPDMSNKDVIRVVDAINEILSEHI</sequence>
<dbReference type="EC" id="2.6.1.87" evidence="1"/>
<dbReference type="EMBL" id="AM942759">
    <property type="protein sequence ID" value="CAR42269.1"/>
    <property type="molecule type" value="Genomic_DNA"/>
</dbReference>
<dbReference type="RefSeq" id="WP_004247945.1">
    <property type="nucleotide sequence ID" value="NC_010554.1"/>
</dbReference>
<dbReference type="SMR" id="B4ETL5"/>
<dbReference type="EnsemblBacteria" id="CAR42269">
    <property type="protein sequence ID" value="CAR42269"/>
    <property type="gene ID" value="PMI1043"/>
</dbReference>
<dbReference type="GeneID" id="6800148"/>
<dbReference type="KEGG" id="pmr:PMI1043"/>
<dbReference type="eggNOG" id="COG0399">
    <property type="taxonomic scope" value="Bacteria"/>
</dbReference>
<dbReference type="HOGENOM" id="CLU_033332_0_3_6"/>
<dbReference type="UniPathway" id="UPA00030"/>
<dbReference type="UniPathway" id="UPA00032">
    <property type="reaction ID" value="UER00493"/>
</dbReference>
<dbReference type="Proteomes" id="UP000008319">
    <property type="component" value="Chromosome"/>
</dbReference>
<dbReference type="GO" id="GO:0016020">
    <property type="term" value="C:membrane"/>
    <property type="evidence" value="ECO:0007669"/>
    <property type="project" value="GOC"/>
</dbReference>
<dbReference type="GO" id="GO:0030170">
    <property type="term" value="F:pyridoxal phosphate binding"/>
    <property type="evidence" value="ECO:0007669"/>
    <property type="project" value="TreeGrafter"/>
</dbReference>
<dbReference type="GO" id="GO:0099620">
    <property type="term" value="F:UDP-4-amino-4-deoxy-L-arabinose aminotransferase"/>
    <property type="evidence" value="ECO:0007669"/>
    <property type="project" value="UniProtKB-EC"/>
</dbReference>
<dbReference type="GO" id="GO:0009245">
    <property type="term" value="P:lipid A biosynthetic process"/>
    <property type="evidence" value="ECO:0007669"/>
    <property type="project" value="UniProtKB-KW"/>
</dbReference>
<dbReference type="GO" id="GO:0009103">
    <property type="term" value="P:lipopolysaccharide biosynthetic process"/>
    <property type="evidence" value="ECO:0007669"/>
    <property type="project" value="UniProtKB-UniRule"/>
</dbReference>
<dbReference type="GO" id="GO:0046677">
    <property type="term" value="P:response to antibiotic"/>
    <property type="evidence" value="ECO:0007669"/>
    <property type="project" value="UniProtKB-KW"/>
</dbReference>
<dbReference type="CDD" id="cd00616">
    <property type="entry name" value="AHBA_syn"/>
    <property type="match status" value="1"/>
</dbReference>
<dbReference type="FunFam" id="3.40.640.10:FF:000040">
    <property type="entry name" value="UDP-4-amino-4-deoxy-L-arabinose--oxoglutarate aminotransferase"/>
    <property type="match status" value="1"/>
</dbReference>
<dbReference type="FunFam" id="3.90.1150.10:FF:000030">
    <property type="entry name" value="UDP-4-amino-4-deoxy-L-arabinose--oxoglutarate aminotransferase"/>
    <property type="match status" value="1"/>
</dbReference>
<dbReference type="Gene3D" id="3.90.1150.10">
    <property type="entry name" value="Aspartate Aminotransferase, domain 1"/>
    <property type="match status" value="1"/>
</dbReference>
<dbReference type="Gene3D" id="3.40.640.10">
    <property type="entry name" value="Type I PLP-dependent aspartate aminotransferase-like (Major domain)"/>
    <property type="match status" value="1"/>
</dbReference>
<dbReference type="HAMAP" id="MF_01167">
    <property type="entry name" value="ArnB_transfer"/>
    <property type="match status" value="1"/>
</dbReference>
<dbReference type="InterPro" id="IPR022850">
    <property type="entry name" value="ArnB_NH2Trfase"/>
</dbReference>
<dbReference type="InterPro" id="IPR000653">
    <property type="entry name" value="DegT/StrS_aminotransferase"/>
</dbReference>
<dbReference type="InterPro" id="IPR015424">
    <property type="entry name" value="PyrdxlP-dep_Trfase"/>
</dbReference>
<dbReference type="InterPro" id="IPR015421">
    <property type="entry name" value="PyrdxlP-dep_Trfase_major"/>
</dbReference>
<dbReference type="InterPro" id="IPR015422">
    <property type="entry name" value="PyrdxlP-dep_Trfase_small"/>
</dbReference>
<dbReference type="NCBIfam" id="NF008658">
    <property type="entry name" value="PRK11658.1"/>
    <property type="match status" value="1"/>
</dbReference>
<dbReference type="PANTHER" id="PTHR30244">
    <property type="entry name" value="TRANSAMINASE"/>
    <property type="match status" value="1"/>
</dbReference>
<dbReference type="PANTHER" id="PTHR30244:SF41">
    <property type="entry name" value="UDP-4-AMINO-4-DEOXY-L-ARABINOSE--OXOGLUTARATE AMINOTRANSFERASE"/>
    <property type="match status" value="1"/>
</dbReference>
<dbReference type="Pfam" id="PF01041">
    <property type="entry name" value="DegT_DnrJ_EryC1"/>
    <property type="match status" value="1"/>
</dbReference>
<dbReference type="PIRSF" id="PIRSF000390">
    <property type="entry name" value="PLP_StrS"/>
    <property type="match status" value="1"/>
</dbReference>
<dbReference type="SUPFAM" id="SSF53383">
    <property type="entry name" value="PLP-dependent transferases"/>
    <property type="match status" value="1"/>
</dbReference>
<feature type="chain" id="PRO_1000137960" description="UDP-4-amino-4-deoxy-L-arabinose--oxoglutarate aminotransferase">
    <location>
        <begin position="1"/>
        <end position="381"/>
    </location>
</feature>
<feature type="modified residue" description="N6-(pyridoxal phosphate)lysine" evidence="1">
    <location>
        <position position="182"/>
    </location>
</feature>
<keyword id="KW-0032">Aminotransferase</keyword>
<keyword id="KW-0046">Antibiotic resistance</keyword>
<keyword id="KW-0441">Lipid A biosynthesis</keyword>
<keyword id="KW-0444">Lipid biosynthesis</keyword>
<keyword id="KW-0443">Lipid metabolism</keyword>
<keyword id="KW-0448">Lipopolysaccharide biosynthesis</keyword>
<keyword id="KW-0663">Pyridoxal phosphate</keyword>
<keyword id="KW-1185">Reference proteome</keyword>
<keyword id="KW-0808">Transferase</keyword>
<name>ARNB_PROMH</name>
<evidence type="ECO:0000255" key="1">
    <source>
        <dbReference type="HAMAP-Rule" id="MF_01167"/>
    </source>
</evidence>
<reference key="1">
    <citation type="journal article" date="2008" name="J. Bacteriol.">
        <title>Complete genome sequence of uropathogenic Proteus mirabilis, a master of both adherence and motility.</title>
        <authorList>
            <person name="Pearson M.M."/>
            <person name="Sebaihia M."/>
            <person name="Churcher C."/>
            <person name="Quail M.A."/>
            <person name="Seshasayee A.S."/>
            <person name="Luscombe N.M."/>
            <person name="Abdellah Z."/>
            <person name="Arrosmith C."/>
            <person name="Atkin B."/>
            <person name="Chillingworth T."/>
            <person name="Hauser H."/>
            <person name="Jagels K."/>
            <person name="Moule S."/>
            <person name="Mungall K."/>
            <person name="Norbertczak H."/>
            <person name="Rabbinowitsch E."/>
            <person name="Walker D."/>
            <person name="Whithead S."/>
            <person name="Thomson N.R."/>
            <person name="Rather P.N."/>
            <person name="Parkhill J."/>
            <person name="Mobley H.L.T."/>
        </authorList>
    </citation>
    <scope>NUCLEOTIDE SEQUENCE [LARGE SCALE GENOMIC DNA]</scope>
    <source>
        <strain>HI4320</strain>
    </source>
</reference>